<proteinExistence type="evidence at protein level"/>
<feature type="chain" id="PRO_0000077589" description="Repressor protein c">
    <location>
        <begin position="1"/>
        <end position="196"/>
    </location>
</feature>
<feature type="domain" description="HTH Mu-type" evidence="1">
    <location>
        <begin position="13"/>
        <end position="81"/>
    </location>
</feature>
<feature type="region of interest" description="Recognition by host ClpX-ClpP">
    <location>
        <begin position="192"/>
        <end position="196"/>
    </location>
</feature>
<feature type="mutagenesis site" description="Resistant to ClpX-ClpP degradation." evidence="5">
    <original>V</original>
    <variation>S</variation>
    <location>
        <position position="183"/>
    </location>
</feature>
<feature type="mutagenesis site" description="Resistant to ClpX-ClpP degradation." evidence="5">
    <original>K</original>
    <variation>S</variation>
    <location>
        <position position="193"/>
    </location>
</feature>
<feature type="mutagenesis site" description="Resistant to ClpX-ClpP degradation." evidence="5">
    <original>V</original>
    <variation>S</variation>
    <location>
        <position position="196"/>
    </location>
</feature>
<feature type="helix" evidence="10">
    <location>
        <begin position="19"/>
        <end position="23"/>
    </location>
</feature>
<feature type="helix" evidence="10">
    <location>
        <begin position="32"/>
        <end position="42"/>
    </location>
</feature>
<feature type="strand" evidence="10">
    <location>
        <begin position="46"/>
        <end position="48"/>
    </location>
</feature>
<feature type="turn" evidence="10">
    <location>
        <begin position="53"/>
        <end position="56"/>
    </location>
</feature>
<feature type="strand" evidence="10">
    <location>
        <begin position="58"/>
        <end position="60"/>
    </location>
</feature>
<feature type="helix" evidence="10">
    <location>
        <begin position="62"/>
        <end position="64"/>
    </location>
</feature>
<feature type="helix" evidence="10">
    <location>
        <begin position="67"/>
        <end position="77"/>
    </location>
</feature>
<keyword id="KW-0002">3D-structure</keyword>
<keyword id="KW-0238">DNA-binding</keyword>
<keyword id="KW-0244">Early protein</keyword>
<keyword id="KW-1035">Host cytoplasm</keyword>
<keyword id="KW-0945">Host-virus interaction</keyword>
<keyword id="KW-1252">Latency-replication decision</keyword>
<keyword id="KW-1185">Reference proteome</keyword>
<keyword id="KW-0678">Repressor</keyword>
<keyword id="KW-0804">Transcription</keyword>
<keyword id="KW-0805">Transcription regulation</keyword>
<keyword id="KW-1251">Viral latency</keyword>
<keyword id="KW-1276">Viral latency initiation and maintenance</keyword>
<gene>
    <name type="primary">repc</name>
    <name type="synonym">c</name>
    <name type="ordered locus">Mup01</name>
</gene>
<reference key="1">
    <citation type="journal article" date="1982" name="Mol. Gen. Genet.">
        <title>Nucleotide sequence of the immunity region of bacteriophage Mu.</title>
        <authorList>
            <person name="Priess H."/>
            <person name="Kamp D."/>
            <person name="Kahmann R."/>
            <person name="Braeuer B."/>
            <person name="Delius H."/>
        </authorList>
    </citation>
    <scope>NUCLEOTIDE SEQUENCE [GENOMIC DNA]</scope>
</reference>
<reference key="2">
    <citation type="book" date="1987" name="Phage Mu">
        <title>Sequence of the left end of Mu.</title>
        <editorList>
            <person name="Symonds N."/>
            <person name="Toussaint A."/>
            <person name="van de Putte P."/>
            <person name="Howe M.M."/>
        </editorList>
        <authorList>
            <person name="Priess H."/>
            <person name="Brauer B."/>
            <person name="Schmidt C."/>
            <person name="Kamp D."/>
        </authorList>
    </citation>
    <scope>NUCLEOTIDE SEQUENCE [GENOMIC DNA]</scope>
</reference>
<reference key="3">
    <citation type="journal article" date="2002" name="J. Mol. Biol.">
        <title>Bacteriophage Mu genome sequence: analysis and comparison with Mu-like prophages in Haemophilus, Neisseria and Deinococcus.</title>
        <authorList>
            <person name="Morgan G.J."/>
            <person name="Hatfull G.F."/>
            <person name="Casjens S."/>
            <person name="Hendrix R.W."/>
        </authorList>
    </citation>
    <scope>NUCLEOTIDE SEQUENCE [LARGE SCALE GENOMIC DNA]</scope>
</reference>
<reference key="4">
    <citation type="journal article" date="1989" name="J. Bacteriol.">
        <title>Localization and regulation of bacteriophage Mu promoters.</title>
        <authorList>
            <person name="Stoddard S.F."/>
            <person name="Howe M.M."/>
        </authorList>
    </citation>
    <scope>INDUCTION</scope>
</reference>
<reference key="5">
    <citation type="journal article" date="1991" name="J. Bacteriol.">
        <title>Temperature-sensitive mutations in the bacteriophage Mu c repressor locate a 63-amino-acid DNA-binding domain.</title>
        <authorList>
            <person name="Vogel J.L."/>
            <person name="Li Z.J."/>
            <person name="Howe M.M."/>
            <person name="Toussaint A."/>
            <person name="Higgins N.P."/>
        </authorList>
    </citation>
    <scope>DNA-BINDING</scope>
</reference>
<reference key="6">
    <citation type="journal article" date="1996" name="J. Bacteriol.">
        <title>Regulatory factors acting at the bacteriophage Mu middle promoter.</title>
        <authorList>
            <person name="Kahmeyer-Gabbe M."/>
            <person name="Howe M.M."/>
        </authorList>
    </citation>
    <scope>FUNCTION</scope>
</reference>
<reference key="7">
    <citation type="journal article" date="1998" name="Eur. J. Biochem.">
        <title>Oligomeric structure of the repressor of the bacteriophage Mu early operon.</title>
        <authorList>
            <person name="Alazard R."/>
            <person name="Ebel C."/>
            <person name="Venien-Bryan V."/>
            <person name="Mourey L."/>
            <person name="Samama J.P."/>
            <person name="Chandler M."/>
        </authorList>
    </citation>
    <scope>SUBUNIT</scope>
</reference>
<reference key="8">
    <citation type="journal article" date="2001" name="Proc. Natl. Acad. Sci. U.S.A.">
        <title>The tRNA function of SsrA contributes to controlling repression of bacteriophage Mu prophage.</title>
        <authorList>
            <person name="Ranquet C."/>
            <person name="Geiselmann J."/>
            <person name="Toussaint A."/>
        </authorList>
    </citation>
    <scope>FUNCTION</scope>
</reference>
<reference key="9">
    <citation type="journal article" date="2002" name="J. Mol. Biol.">
        <title>Derepression of bacteriophage mu transposition functions by truncated forms of the immunity repressor.</title>
        <authorList>
            <person name="O'Handley D."/>
            <person name="Nakai H."/>
        </authorList>
    </citation>
    <scope>FUNCTION</scope>
</reference>
<reference key="10">
    <citation type="journal article" date="2005" name="J. Mol. Biol.">
        <title>Control of bacteriophage mu lysogenic repression.</title>
        <authorList>
            <person name="Ranquet C."/>
            <person name="Toussaint A."/>
            <person name="de Jong H."/>
            <person name="Maenhaut-Michel G."/>
            <person name="Geiselmann J."/>
        </authorList>
    </citation>
    <scope>FUNCTION</scope>
    <scope>INDUCTION</scope>
</reference>
<reference key="11">
    <citation type="journal article" date="2008" name="J. Biol. Chem.">
        <title>Activation of a dormant ClpX recognition motif of bacteriophage Mu repressor by inducing high local flexibility.</title>
        <authorList>
            <person name="Marshall-Batty K.R."/>
            <person name="Nakai H."/>
        </authorList>
    </citation>
    <scope>FUNCTION</scope>
    <scope>DOMAIN</scope>
    <scope>MUTAGENESIS OF VAL-183; LYS-193 AND VAL-196</scope>
</reference>
<reference key="12">
    <citation type="journal article" date="2001" name="Nat. Struct. Biol.">
        <title>The Mu repressor-DNA complex contains an immobilized 'wing' within the minor groove.</title>
        <authorList>
            <person name="Wojciak J.M."/>
            <person name="Iwahara J."/>
            <person name="Clubb R.T."/>
        </authorList>
    </citation>
    <scope>STRUCTURE BY NMR OF 1-59</scope>
    <scope>DNA-BINDING</scope>
</reference>
<organismHost>
    <name type="scientific">Enterobacteriaceae</name>
    <dbReference type="NCBI Taxonomy" id="543"/>
</organismHost>
<name>REPC_BPMU</name>
<organism>
    <name type="scientific">Escherichia phage Mu</name>
    <name type="common">Bacteriophage Mu</name>
    <dbReference type="NCBI Taxonomy" id="2681603"/>
    <lineage>
        <taxon>Viruses</taxon>
        <taxon>Duplodnaviria</taxon>
        <taxon>Heunggongvirae</taxon>
        <taxon>Uroviricota</taxon>
        <taxon>Caudoviricetes</taxon>
        <taxon>Muvirus</taxon>
        <taxon>Muvirus mu</taxon>
    </lineage>
</organism>
<protein>
    <recommendedName>
        <fullName>Repressor protein c</fullName>
        <shortName>Repc</shortName>
    </recommendedName>
    <alternativeName>
        <fullName>CI</fullName>
    </alternativeName>
    <alternativeName>
        <fullName>Gene product 1</fullName>
        <shortName>gp1</shortName>
    </alternativeName>
    <alternativeName>
        <fullName>Mu repressor</fullName>
        <shortName>MuR</shortName>
    </alternativeName>
</protein>
<dbReference type="EMBL" id="V01464">
    <property type="protein sequence ID" value="CAA24711.1"/>
    <property type="status" value="ALT_INIT"/>
    <property type="molecule type" value="Genomic_DNA"/>
</dbReference>
<dbReference type="EMBL" id="M64097">
    <property type="protein sequence ID" value="AAA32376.1"/>
    <property type="status" value="ALT_INIT"/>
    <property type="molecule type" value="Genomic_DNA"/>
</dbReference>
<dbReference type="EMBL" id="AF083977">
    <property type="protein sequence ID" value="AAF01132.1"/>
    <property type="status" value="ALT_INIT"/>
    <property type="molecule type" value="Genomic_DNA"/>
</dbReference>
<dbReference type="PIR" id="S07291">
    <property type="entry name" value="S07291"/>
</dbReference>
<dbReference type="RefSeq" id="NP_050605.1">
    <property type="nucleotide sequence ID" value="NC_000929.1"/>
</dbReference>
<dbReference type="PDB" id="1G4D">
    <property type="method" value="NMR"/>
    <property type="chains" value="A=13-81"/>
</dbReference>
<dbReference type="PDB" id="1QPM">
    <property type="method" value="NMR"/>
    <property type="chains" value="A=13-81"/>
</dbReference>
<dbReference type="PDBsum" id="1G4D"/>
<dbReference type="PDBsum" id="1QPM"/>
<dbReference type="SMR" id="P06019"/>
<dbReference type="GeneID" id="2636266"/>
<dbReference type="KEGG" id="vg:2636266"/>
<dbReference type="EvolutionaryTrace" id="P06019"/>
<dbReference type="Proteomes" id="UP000002611">
    <property type="component" value="Genome"/>
</dbReference>
<dbReference type="Proteomes" id="UP000401936">
    <property type="component" value="Segment"/>
</dbReference>
<dbReference type="GO" id="GO:0030430">
    <property type="term" value="C:host cell cytoplasm"/>
    <property type="evidence" value="ECO:0007669"/>
    <property type="project" value="UniProtKB-SubCell"/>
</dbReference>
<dbReference type="GO" id="GO:0017053">
    <property type="term" value="C:transcription repressor complex"/>
    <property type="evidence" value="ECO:0000314"/>
    <property type="project" value="UniProtKB"/>
</dbReference>
<dbReference type="GO" id="GO:0003677">
    <property type="term" value="F:DNA binding"/>
    <property type="evidence" value="ECO:0007669"/>
    <property type="project" value="UniProtKB-KW"/>
</dbReference>
<dbReference type="GO" id="GO:0098689">
    <property type="term" value="P:latency-replication decision"/>
    <property type="evidence" value="ECO:0007669"/>
    <property type="project" value="UniProtKB-KW"/>
</dbReference>
<dbReference type="GO" id="GO:0019042">
    <property type="term" value="P:viral latency"/>
    <property type="evidence" value="ECO:0007669"/>
    <property type="project" value="UniProtKB-KW"/>
</dbReference>
<dbReference type="Gene3D" id="1.10.10.10">
    <property type="entry name" value="Winged helix-like DNA-binding domain superfamily/Winged helix DNA-binding domain"/>
    <property type="match status" value="1"/>
</dbReference>
<dbReference type="InterPro" id="IPR009061">
    <property type="entry name" value="DNA-bd_dom_put_sf"/>
</dbReference>
<dbReference type="InterPro" id="IPR003314">
    <property type="entry name" value="Mu-type_HTH"/>
</dbReference>
<dbReference type="InterPro" id="IPR036388">
    <property type="entry name" value="WH-like_DNA-bd_sf"/>
</dbReference>
<dbReference type="Pfam" id="PF02316">
    <property type="entry name" value="HTH_Tnp_Mu_1"/>
    <property type="match status" value="1"/>
</dbReference>
<dbReference type="SUPFAM" id="SSF46955">
    <property type="entry name" value="Putative DNA-binding domain"/>
    <property type="match status" value="1"/>
</dbReference>
<dbReference type="PROSITE" id="PS51702">
    <property type="entry name" value="HTH_MU"/>
    <property type="match status" value="1"/>
</dbReference>
<comment type="function">
    <text evidence="2 3 4 5 7">Promotes latency by binding operators O1 and O2 in the enhancer/operator region, thereby repressing the transcription from the Pe (early) promoter and blocking the expression of the genes required for replication (lytic growth). Competes with DDE-recombinase A for binding to the internal activation sequence (IAS), which overlaps O1 and O2. The outcome of this competition determines if the virus enters latency or starts replication. Makes the cell immune to superinfection by repressing genes expression of any subsequent incoming viral genome.</text>
</comment>
<comment type="subunit">
    <text evidence="9">Homodimer. Three homodimers assemble as a homohexamer (Probable).</text>
</comment>
<comment type="subcellular location">
    <subcellularLocation>
        <location evidence="8">Host cytoplasm</location>
    </subcellularLocation>
</comment>
<comment type="induction">
    <text evidence="4 6">Expressed in the early phase of the viral replicative cycle. When present at high concentration, negatively regulates its own expression by binding to O3 (PcM promoter). PcM promoter, and thus Repc expression, is blocked by Ner. The host SsrA, the ClpXP host protease that degrades Repressor c protein, the Lon protease, and the stationary phase-specific sigma factor RpoS are all influencing Mu repression in response to either temperature or stationary growth phase. Decreased availability of host SsrA in growing cells would favor latency, whereas starvation would favor Repc degradation and hence induction.</text>
</comment>
<comment type="domain">
    <text evidence="5">The winged HTH N-terminal domain cooperatively binds to three operators O1, O2, and O3 with respectively 3, 4 and 2 binding sites. The C-terminal domain (CTD) regulates DNA binding by the N-terminal domain and degradation by ClpX-ClpP protease.</text>
</comment>
<comment type="PTM">
    <text>C-terminally truncated forms act as exceptionally stable repressors that prevent prophage induction.</text>
</comment>
<comment type="similarity">
    <text evidence="8">Belongs to the mulikevirus repressor c protein family.</text>
</comment>
<comment type="caution">
    <text evidence="8">Translation initiates from a non-canonical start codon (UUG).</text>
</comment>
<comment type="sequence caution" evidence="8">
    <conflict type="erroneous initiation">
        <sequence resource="EMBL-CDS" id="AAA32376"/>
    </conflict>
    <text>Truncated N-terminus.</text>
</comment>
<comment type="sequence caution" evidence="8">
    <conflict type="erroneous initiation">
        <sequence resource="EMBL-CDS" id="AAF01132"/>
    </conflict>
    <text>Truncated N-terminus.</text>
</comment>
<comment type="sequence caution" evidence="8">
    <conflict type="erroneous initiation">
        <sequence resource="EMBL-CDS" id="CAA24711"/>
    </conflict>
    <text>Truncated N-terminus.</text>
</comment>
<sequence>MKSNFIEKNNTEKSIWCSPQEIMAADGMPGSVAGVHYRANVQGWTKQKKEGVKGGKAVEYDVMSMPTKEREQVIAHLGLSTPDTGAQANEKQDSSELINKLTTTLINMIEELEPDEARKALKLLSKGGLLALMPLVFNEQKLYSFIGFSQQSIQTLMMLDALPEEKRKEILSKYGIHEQESVVVPSQEPQEVKKAV</sequence>
<accession>P06019</accession>
<evidence type="ECO:0000255" key="1">
    <source>
        <dbReference type="PROSITE-ProRule" id="PRU01039"/>
    </source>
</evidence>
<evidence type="ECO:0000269" key="2">
    <source>
    </source>
</evidence>
<evidence type="ECO:0000269" key="3">
    <source>
    </source>
</evidence>
<evidence type="ECO:0000269" key="4">
    <source>
    </source>
</evidence>
<evidence type="ECO:0000269" key="5">
    <source>
    </source>
</evidence>
<evidence type="ECO:0000269" key="6">
    <source>
    </source>
</evidence>
<evidence type="ECO:0000269" key="7">
    <source>
    </source>
</evidence>
<evidence type="ECO:0000305" key="8"/>
<evidence type="ECO:0000305" key="9">
    <source>
    </source>
</evidence>
<evidence type="ECO:0007829" key="10">
    <source>
        <dbReference type="PDB" id="1G4D"/>
    </source>
</evidence>